<comment type="function">
    <text evidence="1">May play a role in cell wall synthesis as L-alanine is an important constituent of the peptidoglycan layer.</text>
</comment>
<comment type="catalytic activity">
    <reaction>
        <text>L-alanine + NAD(+) + H2O = pyruvate + NH4(+) + NADH + H(+)</text>
        <dbReference type="Rhea" id="RHEA:18405"/>
        <dbReference type="ChEBI" id="CHEBI:15361"/>
        <dbReference type="ChEBI" id="CHEBI:15377"/>
        <dbReference type="ChEBI" id="CHEBI:15378"/>
        <dbReference type="ChEBI" id="CHEBI:28938"/>
        <dbReference type="ChEBI" id="CHEBI:57540"/>
        <dbReference type="ChEBI" id="CHEBI:57945"/>
        <dbReference type="ChEBI" id="CHEBI:57972"/>
        <dbReference type="EC" id="1.4.1.1"/>
    </reaction>
</comment>
<comment type="pathway">
    <text>Amino-acid degradation; L-alanine degradation via dehydrogenase pathway; NH(3) and pyruvate from L-alanine: step 1/1.</text>
</comment>
<comment type="similarity">
    <text evidence="3">Belongs to the AlaDH/PNT family.</text>
</comment>
<evidence type="ECO:0000250" key="1"/>
<evidence type="ECO:0000255" key="2"/>
<evidence type="ECO:0000305" key="3"/>
<accession>Q2FXL7</accession>
<sequence length="372" mass="40105">MKIGIPREIKNNENRVGLSPSGVHALVESGHTVLVETNAGSGSFFEDVDYKEAGAEIVAEQAKVWDVDMVIKVKEPLESEYPYFKEGLVLFTYLHLANEEKLTQALIDRKVISIAYETVQLPDRSLPLLSPMSEVAGRMSAQVGAEFLQKLNGGMGILLGGVPGVPKGKVTIIGGGQAGTNAAKIALGLGADVTILDVNPKRLQQLDDLFGGRVHTIMSNPLNIELYVKQSDLVIGAVLIPGAKAPRLVTEDMIKQMKNGSVIIDIAIDQGGIFETTDKITTHDDPTYIKHGVVHYAVANMPGAVPRTSTLALNNATLPYALMLANKGYREAFKSNQPLSLGLNTYKGHVTNKGVAEAFEMEYKSVEEALQL</sequence>
<name>DHA2_STAA8</name>
<gene>
    <name type="primary">ald2</name>
    <name type="ordered locus">SAOUHSC_01818</name>
</gene>
<protein>
    <recommendedName>
        <fullName>Alanine dehydrogenase 2</fullName>
        <ecNumber>1.4.1.1</ecNumber>
    </recommendedName>
</protein>
<proteinExistence type="inferred from homology"/>
<feature type="chain" id="PRO_0000287321" description="Alanine dehydrogenase 2">
    <location>
        <begin position="1"/>
        <end position="372"/>
    </location>
</feature>
<feature type="active site" evidence="2">
    <location>
        <position position="95"/>
    </location>
</feature>
<feature type="binding site" evidence="1">
    <location>
        <begin position="169"/>
        <end position="199"/>
    </location>
    <ligand>
        <name>NAD(+)</name>
        <dbReference type="ChEBI" id="CHEBI:57540"/>
    </ligand>
</feature>
<keyword id="KW-0520">NAD</keyword>
<keyword id="KW-0560">Oxidoreductase</keyword>
<keyword id="KW-1185">Reference proteome</keyword>
<organism>
    <name type="scientific">Staphylococcus aureus (strain NCTC 8325 / PS 47)</name>
    <dbReference type="NCBI Taxonomy" id="93061"/>
    <lineage>
        <taxon>Bacteria</taxon>
        <taxon>Bacillati</taxon>
        <taxon>Bacillota</taxon>
        <taxon>Bacilli</taxon>
        <taxon>Bacillales</taxon>
        <taxon>Staphylococcaceae</taxon>
        <taxon>Staphylococcus</taxon>
    </lineage>
</organism>
<dbReference type="EC" id="1.4.1.1"/>
<dbReference type="EMBL" id="CP000253">
    <property type="protein sequence ID" value="ABD30886.1"/>
    <property type="molecule type" value="Genomic_DNA"/>
</dbReference>
<dbReference type="RefSeq" id="YP_500323.1">
    <property type="nucleotide sequence ID" value="NC_007795.1"/>
</dbReference>
<dbReference type="SMR" id="Q2FXL7"/>
<dbReference type="STRING" id="93061.SAOUHSC_01818"/>
<dbReference type="PaxDb" id="1280-SAXN108_1737"/>
<dbReference type="GeneID" id="3919288"/>
<dbReference type="KEGG" id="sao:SAOUHSC_01818"/>
<dbReference type="PATRIC" id="fig|93061.5.peg.1657"/>
<dbReference type="eggNOG" id="COG0686">
    <property type="taxonomic scope" value="Bacteria"/>
</dbReference>
<dbReference type="HOGENOM" id="CLU_003376_3_0_9"/>
<dbReference type="OrthoDB" id="9804592at2"/>
<dbReference type="UniPathway" id="UPA00527">
    <property type="reaction ID" value="UER00585"/>
</dbReference>
<dbReference type="PRO" id="PR:Q2FXL7"/>
<dbReference type="Proteomes" id="UP000008816">
    <property type="component" value="Chromosome"/>
</dbReference>
<dbReference type="GO" id="GO:0000286">
    <property type="term" value="F:alanine dehydrogenase activity"/>
    <property type="evidence" value="ECO:0000318"/>
    <property type="project" value="GO_Central"/>
</dbReference>
<dbReference type="GO" id="GO:0006524">
    <property type="term" value="P:alanine catabolic process"/>
    <property type="evidence" value="ECO:0000318"/>
    <property type="project" value="GO_Central"/>
</dbReference>
<dbReference type="GO" id="GO:0042853">
    <property type="term" value="P:L-alanine catabolic process"/>
    <property type="evidence" value="ECO:0007669"/>
    <property type="project" value="UniProtKB-UniPathway"/>
</dbReference>
<dbReference type="CDD" id="cd05305">
    <property type="entry name" value="L-AlaDH"/>
    <property type="match status" value="1"/>
</dbReference>
<dbReference type="FunFam" id="3.40.50.720:FF:000049">
    <property type="entry name" value="Alanine dehydrogenase"/>
    <property type="match status" value="1"/>
</dbReference>
<dbReference type="Gene3D" id="3.40.50.720">
    <property type="entry name" value="NAD(P)-binding Rossmann-like Domain"/>
    <property type="match status" value="2"/>
</dbReference>
<dbReference type="InterPro" id="IPR008141">
    <property type="entry name" value="Ala_DH"/>
</dbReference>
<dbReference type="InterPro" id="IPR008143">
    <property type="entry name" value="Ala_DH/PNT_CS2"/>
</dbReference>
<dbReference type="InterPro" id="IPR008142">
    <property type="entry name" value="AlaDH/PNT_CS1"/>
</dbReference>
<dbReference type="InterPro" id="IPR007886">
    <property type="entry name" value="AlaDH/PNT_N"/>
</dbReference>
<dbReference type="InterPro" id="IPR007698">
    <property type="entry name" value="AlaDH/PNT_NAD(H)-bd"/>
</dbReference>
<dbReference type="InterPro" id="IPR036291">
    <property type="entry name" value="NAD(P)-bd_dom_sf"/>
</dbReference>
<dbReference type="NCBIfam" id="TIGR00518">
    <property type="entry name" value="alaDH"/>
    <property type="match status" value="1"/>
</dbReference>
<dbReference type="PANTHER" id="PTHR42795">
    <property type="entry name" value="ALANINE DEHYDROGENASE"/>
    <property type="match status" value="1"/>
</dbReference>
<dbReference type="PANTHER" id="PTHR42795:SF1">
    <property type="entry name" value="ALANINE DEHYDROGENASE"/>
    <property type="match status" value="1"/>
</dbReference>
<dbReference type="Pfam" id="PF01262">
    <property type="entry name" value="AlaDh_PNT_C"/>
    <property type="match status" value="1"/>
</dbReference>
<dbReference type="Pfam" id="PF05222">
    <property type="entry name" value="AlaDh_PNT_N"/>
    <property type="match status" value="1"/>
</dbReference>
<dbReference type="PIRSF" id="PIRSF000183">
    <property type="entry name" value="Alanine_dh"/>
    <property type="match status" value="1"/>
</dbReference>
<dbReference type="SMART" id="SM01002">
    <property type="entry name" value="AlaDh_PNT_C"/>
    <property type="match status" value="1"/>
</dbReference>
<dbReference type="SMART" id="SM01003">
    <property type="entry name" value="AlaDh_PNT_N"/>
    <property type="match status" value="1"/>
</dbReference>
<dbReference type="SUPFAM" id="SSF52283">
    <property type="entry name" value="Formate/glycerate dehydrogenase catalytic domain-like"/>
    <property type="match status" value="1"/>
</dbReference>
<dbReference type="SUPFAM" id="SSF51735">
    <property type="entry name" value="NAD(P)-binding Rossmann-fold domains"/>
    <property type="match status" value="1"/>
</dbReference>
<dbReference type="PROSITE" id="PS00836">
    <property type="entry name" value="ALADH_PNT_1"/>
    <property type="match status" value="1"/>
</dbReference>
<dbReference type="PROSITE" id="PS00837">
    <property type="entry name" value="ALADH_PNT_2"/>
    <property type="match status" value="1"/>
</dbReference>
<reference key="1">
    <citation type="book" date="2006" name="Gram positive pathogens, 2nd edition">
        <title>The Staphylococcus aureus NCTC 8325 genome.</title>
        <editorList>
            <person name="Fischetti V."/>
            <person name="Novick R."/>
            <person name="Ferretti J."/>
            <person name="Portnoy D."/>
            <person name="Rood J."/>
        </editorList>
        <authorList>
            <person name="Gillaspy A.F."/>
            <person name="Worrell V."/>
            <person name="Orvis J."/>
            <person name="Roe B.A."/>
            <person name="Dyer D.W."/>
            <person name="Iandolo J.J."/>
        </authorList>
    </citation>
    <scope>NUCLEOTIDE SEQUENCE [LARGE SCALE GENOMIC DNA]</scope>
    <source>
        <strain>NCTC 8325 / PS 47</strain>
    </source>
</reference>